<sequence length="600" mass="65564">MAKEIILGIDLGTTNSVVAIIENQKPVVLENPNGKTTTPSVVAFKNNEEIVGDAAKRQLETNPEAIASIKRLMGTDKTVRANERDYKPEEISAKILAYLKEYAEKKIGHKVTKAVITVPAYFDNAQREATKNAGKIAGLQVERIINEPTAAALAFGLDKTEKEMKVLVYDLGGGTFDVSVLELSGGTFEVLSTSGDNHLGGDDWDNEIVNWLVKKIKEEYDFDPKSDKMALTRLKEEAEKTKINLSNQSVSTVSLPFLGMGKNGPINVELELKRSEFEKMTAHLIDRTRKPIVDALKQAKIEASDLDEVLLVGGSTRMPAVQSMIEHTLNKKPNRSINPDEVVAIGAAIQGGVLAGEISDVLLLDVTPLTLGIETLGGIATPLIPRNTTIPVTKSQIFSTAEDNQTEVTISVVQGERQLAADNKMLGRFNLSGIEAAPRGLPQIEVSFSIDVNGITTVSAKDKKTGKEQTITIKNTSTLSEEEINKMIQEAEENREADALKKDKIETTVRAEGLINQLEKSITDQGEKIDPKQKELLEKQIQELKDLLKEEKTDELKLKLDQIEAAAQSFAQATAQQANTSESDPKADDSNTIDAEIKQD</sequence>
<comment type="function">
    <text evidence="1">Acts as a chaperone.</text>
</comment>
<comment type="induction">
    <text evidence="1">By stress conditions e.g. heat shock.</text>
</comment>
<comment type="similarity">
    <text evidence="1">Belongs to the heat shock protein 70 family.</text>
</comment>
<accession>Q4AAR4</accession>
<evidence type="ECO:0000255" key="1">
    <source>
        <dbReference type="HAMAP-Rule" id="MF_00332"/>
    </source>
</evidence>
<evidence type="ECO:0000256" key="2">
    <source>
        <dbReference type="SAM" id="MobiDB-lite"/>
    </source>
</evidence>
<feature type="chain" id="PRO_0000225980" description="Chaperone protein DnaK">
    <location>
        <begin position="1"/>
        <end position="600"/>
    </location>
</feature>
<feature type="region of interest" description="Disordered" evidence="2">
    <location>
        <begin position="569"/>
        <end position="600"/>
    </location>
</feature>
<feature type="compositionally biased region" description="Low complexity" evidence="2">
    <location>
        <begin position="569"/>
        <end position="578"/>
    </location>
</feature>
<feature type="compositionally biased region" description="Basic and acidic residues" evidence="2">
    <location>
        <begin position="583"/>
        <end position="600"/>
    </location>
</feature>
<feature type="modified residue" description="Phosphothreonine; by autocatalysis" evidence="1">
    <location>
        <position position="175"/>
    </location>
</feature>
<gene>
    <name evidence="1" type="primary">dnaK</name>
    <name type="ordered locus">MHJ_0063</name>
</gene>
<protein>
    <recommendedName>
        <fullName evidence="1">Chaperone protein DnaK</fullName>
    </recommendedName>
    <alternativeName>
        <fullName evidence="1">HSP70</fullName>
    </alternativeName>
    <alternativeName>
        <fullName evidence="1">Heat shock 70 kDa protein</fullName>
    </alternativeName>
    <alternativeName>
        <fullName evidence="1">Heat shock protein 70</fullName>
    </alternativeName>
</protein>
<proteinExistence type="inferred from homology"/>
<keyword id="KW-0067">ATP-binding</keyword>
<keyword id="KW-0143">Chaperone</keyword>
<keyword id="KW-0547">Nucleotide-binding</keyword>
<keyword id="KW-0597">Phosphoprotein</keyword>
<keyword id="KW-0346">Stress response</keyword>
<reference key="1">
    <citation type="journal article" date="2005" name="J. Bacteriol.">
        <title>Swine and poultry pathogens: the complete genome sequences of two strains of Mycoplasma hyopneumoniae and a strain of Mycoplasma synoviae.</title>
        <authorList>
            <person name="Vasconcelos A.T.R."/>
            <person name="Ferreira H.B."/>
            <person name="Bizarro C.V."/>
            <person name="Bonatto S.L."/>
            <person name="Carvalho M.O."/>
            <person name="Pinto P.M."/>
            <person name="Almeida D.F."/>
            <person name="Almeida L.G.P."/>
            <person name="Almeida R."/>
            <person name="Alves-Junior L."/>
            <person name="Assuncao E.N."/>
            <person name="Azevedo V.A.C."/>
            <person name="Bogo M.R."/>
            <person name="Brigido M.M."/>
            <person name="Brocchi M."/>
            <person name="Burity H.A."/>
            <person name="Camargo A.A."/>
            <person name="Camargo S.S."/>
            <person name="Carepo M.S."/>
            <person name="Carraro D.M."/>
            <person name="de Mattos Cascardo J.C."/>
            <person name="Castro L.A."/>
            <person name="Cavalcanti G."/>
            <person name="Chemale G."/>
            <person name="Collevatti R.G."/>
            <person name="Cunha C.W."/>
            <person name="Dallagiovanna B."/>
            <person name="Dambros B.P."/>
            <person name="Dellagostin O.A."/>
            <person name="Falcao C."/>
            <person name="Fantinatti-Garboggini F."/>
            <person name="Felipe M.S.S."/>
            <person name="Fiorentin L."/>
            <person name="Franco G.R."/>
            <person name="Freitas N.S.A."/>
            <person name="Frias D."/>
            <person name="Grangeiro T.B."/>
            <person name="Grisard E.C."/>
            <person name="Guimaraes C.T."/>
            <person name="Hungria M."/>
            <person name="Jardim S.N."/>
            <person name="Krieger M.A."/>
            <person name="Laurino J.P."/>
            <person name="Lima L.F.A."/>
            <person name="Lopes M.I."/>
            <person name="Loreto E.L.S."/>
            <person name="Madeira H.M.F."/>
            <person name="Manfio G.P."/>
            <person name="Maranhao A.Q."/>
            <person name="Martinkovics C.T."/>
            <person name="Medeiros S.R.B."/>
            <person name="Moreira M.A.M."/>
            <person name="Neiva M."/>
            <person name="Ramalho-Neto C.E."/>
            <person name="Nicolas M.F."/>
            <person name="Oliveira S.C."/>
            <person name="Paixao R.F.C."/>
            <person name="Pedrosa F.O."/>
            <person name="Pena S.D.J."/>
            <person name="Pereira M."/>
            <person name="Pereira-Ferrari L."/>
            <person name="Piffer I."/>
            <person name="Pinto L.S."/>
            <person name="Potrich D.P."/>
            <person name="Salim A.C.M."/>
            <person name="Santos F.R."/>
            <person name="Schmitt R."/>
            <person name="Schneider M.P.C."/>
            <person name="Schrank A."/>
            <person name="Schrank I.S."/>
            <person name="Schuck A.F."/>
            <person name="Seuanez H.N."/>
            <person name="Silva D.W."/>
            <person name="Silva R."/>
            <person name="Silva S.C."/>
            <person name="Soares C.M.A."/>
            <person name="Souza K.R.L."/>
            <person name="Souza R.C."/>
            <person name="Staats C.C."/>
            <person name="Steffens M.B.R."/>
            <person name="Teixeira S.M.R."/>
            <person name="Urmenyi T.P."/>
            <person name="Vainstein M.H."/>
            <person name="Zuccherato L.W."/>
            <person name="Simpson A.J.G."/>
            <person name="Zaha A."/>
        </authorList>
    </citation>
    <scope>NUCLEOTIDE SEQUENCE [LARGE SCALE GENOMIC DNA]</scope>
    <source>
        <strain>J / ATCC 25934 / NCTC 10110</strain>
    </source>
</reference>
<dbReference type="EMBL" id="AE017243">
    <property type="protein sequence ID" value="AAZ44157.1"/>
    <property type="molecule type" value="Genomic_DNA"/>
</dbReference>
<dbReference type="RefSeq" id="WP_011283883.1">
    <property type="nucleotide sequence ID" value="NC_007295.1"/>
</dbReference>
<dbReference type="SMR" id="Q4AAR4"/>
<dbReference type="GeneID" id="41334353"/>
<dbReference type="KEGG" id="mhj:MHJ_0063"/>
<dbReference type="eggNOG" id="COG0443">
    <property type="taxonomic scope" value="Bacteria"/>
</dbReference>
<dbReference type="HOGENOM" id="CLU_005965_2_4_14"/>
<dbReference type="OrthoDB" id="9766019at2"/>
<dbReference type="Proteomes" id="UP000000548">
    <property type="component" value="Chromosome"/>
</dbReference>
<dbReference type="GO" id="GO:0005524">
    <property type="term" value="F:ATP binding"/>
    <property type="evidence" value="ECO:0007669"/>
    <property type="project" value="UniProtKB-UniRule"/>
</dbReference>
<dbReference type="GO" id="GO:0140662">
    <property type="term" value="F:ATP-dependent protein folding chaperone"/>
    <property type="evidence" value="ECO:0007669"/>
    <property type="project" value="InterPro"/>
</dbReference>
<dbReference type="GO" id="GO:0051082">
    <property type="term" value="F:unfolded protein binding"/>
    <property type="evidence" value="ECO:0007669"/>
    <property type="project" value="InterPro"/>
</dbReference>
<dbReference type="CDD" id="cd10234">
    <property type="entry name" value="ASKHA_NBD_HSP70_DnaK-like"/>
    <property type="match status" value="1"/>
</dbReference>
<dbReference type="FunFam" id="2.60.34.10:FF:000014">
    <property type="entry name" value="Chaperone protein DnaK HSP70"/>
    <property type="match status" value="1"/>
</dbReference>
<dbReference type="FunFam" id="3.30.420.40:FF:000071">
    <property type="entry name" value="Molecular chaperone DnaK"/>
    <property type="match status" value="1"/>
</dbReference>
<dbReference type="FunFam" id="3.90.640.10:FF:000003">
    <property type="entry name" value="Molecular chaperone DnaK"/>
    <property type="match status" value="1"/>
</dbReference>
<dbReference type="Gene3D" id="1.20.1270.10">
    <property type="match status" value="1"/>
</dbReference>
<dbReference type="Gene3D" id="3.30.420.40">
    <property type="match status" value="2"/>
</dbReference>
<dbReference type="Gene3D" id="3.90.640.10">
    <property type="entry name" value="Actin, Chain A, domain 4"/>
    <property type="match status" value="1"/>
</dbReference>
<dbReference type="Gene3D" id="2.60.34.10">
    <property type="entry name" value="Substrate Binding Domain Of DNAk, Chain A, domain 1"/>
    <property type="match status" value="1"/>
</dbReference>
<dbReference type="HAMAP" id="MF_00332">
    <property type="entry name" value="DnaK"/>
    <property type="match status" value="1"/>
</dbReference>
<dbReference type="InterPro" id="IPR043129">
    <property type="entry name" value="ATPase_NBD"/>
</dbReference>
<dbReference type="InterPro" id="IPR012725">
    <property type="entry name" value="Chaperone_DnaK"/>
</dbReference>
<dbReference type="InterPro" id="IPR018181">
    <property type="entry name" value="Heat_shock_70_CS"/>
</dbReference>
<dbReference type="InterPro" id="IPR029048">
    <property type="entry name" value="HSP70_C_sf"/>
</dbReference>
<dbReference type="InterPro" id="IPR029047">
    <property type="entry name" value="HSP70_peptide-bd_sf"/>
</dbReference>
<dbReference type="InterPro" id="IPR013126">
    <property type="entry name" value="Hsp_70_fam"/>
</dbReference>
<dbReference type="NCBIfam" id="NF001413">
    <property type="entry name" value="PRK00290.1"/>
    <property type="match status" value="1"/>
</dbReference>
<dbReference type="NCBIfam" id="TIGR02350">
    <property type="entry name" value="prok_dnaK"/>
    <property type="match status" value="1"/>
</dbReference>
<dbReference type="PANTHER" id="PTHR19375">
    <property type="entry name" value="HEAT SHOCK PROTEIN 70KDA"/>
    <property type="match status" value="1"/>
</dbReference>
<dbReference type="Pfam" id="PF00012">
    <property type="entry name" value="HSP70"/>
    <property type="match status" value="1"/>
</dbReference>
<dbReference type="PRINTS" id="PR00301">
    <property type="entry name" value="HEATSHOCK70"/>
</dbReference>
<dbReference type="SUPFAM" id="SSF53067">
    <property type="entry name" value="Actin-like ATPase domain"/>
    <property type="match status" value="2"/>
</dbReference>
<dbReference type="SUPFAM" id="SSF100934">
    <property type="entry name" value="Heat shock protein 70kD (HSP70), C-terminal subdomain"/>
    <property type="match status" value="1"/>
</dbReference>
<dbReference type="SUPFAM" id="SSF100920">
    <property type="entry name" value="Heat shock protein 70kD (HSP70), peptide-binding domain"/>
    <property type="match status" value="1"/>
</dbReference>
<dbReference type="PROSITE" id="PS00297">
    <property type="entry name" value="HSP70_1"/>
    <property type="match status" value="1"/>
</dbReference>
<dbReference type="PROSITE" id="PS00329">
    <property type="entry name" value="HSP70_2"/>
    <property type="match status" value="1"/>
</dbReference>
<dbReference type="PROSITE" id="PS01036">
    <property type="entry name" value="HSP70_3"/>
    <property type="match status" value="1"/>
</dbReference>
<name>DNAK_MESHJ</name>
<organism>
    <name type="scientific">Mesomycoplasma hyopneumoniae (strain J / ATCC 25934 / NCTC 10110)</name>
    <name type="common">Mycoplasma hyopneumoniae</name>
    <dbReference type="NCBI Taxonomy" id="262719"/>
    <lineage>
        <taxon>Bacteria</taxon>
        <taxon>Bacillati</taxon>
        <taxon>Mycoplasmatota</taxon>
        <taxon>Mycoplasmoidales</taxon>
        <taxon>Metamycoplasmataceae</taxon>
        <taxon>Mesomycoplasma</taxon>
    </lineage>
</organism>